<accession>P37988</accession>
<evidence type="ECO:0000250" key="1"/>
<evidence type="ECO:0000305" key="2"/>
<sequence length="231" mass="25824">MDVFVKILSDFGFTRLSSSLHVPIVVHCMPGAGKSSCIRALLKADSRFVAYTLGVPDPCNLDGLCIKAFTGSVDLKYFNILDEYARYNGDASDFFALFGDPVQSPPRNLYRAHFKAVLSKRFGSCTAQLLRELGFEVESTKEDLVSIRGLYDFDPVGTVIYYEKEIGCLLRAHSIEAYEPEEVVGKTFETVTFVTAENHIPAESRHLVYQCLTRHRSVLHLMTPDASYTST</sequence>
<keyword id="KW-1035">Host cytoplasm</keyword>
<keyword id="KW-0945">Host-virus interaction</keyword>
<keyword id="KW-1090">Inhibition of host innate immune response by virus</keyword>
<keyword id="KW-0694">RNA-binding</keyword>
<keyword id="KW-0941">Suppressor of RNA silencing</keyword>
<keyword id="KW-0813">Transport</keyword>
<keyword id="KW-0899">Viral immunoevasion</keyword>
<keyword id="KW-0916">Viral movement protein</keyword>
<protein>
    <recommendedName>
        <fullName>Movement and silencing protein TGBp1</fullName>
    </recommendedName>
    <alternativeName>
        <fullName>25 kDa protein</fullName>
    </alternativeName>
    <alternativeName>
        <fullName>Silencing suppressor P25</fullName>
    </alternativeName>
    <alternativeName>
        <fullName>Triple gene block 1 protein</fullName>
        <shortName>TGBp1</shortName>
    </alternativeName>
</protein>
<comment type="function">
    <text evidence="1">Transports viral genome to neighboring plant cells directly through plasmosdesmata, without any budding. The movement protein allows efficient cell to cell propagation, by bypassing the host cell wall barrier. Increases plasmodesma size exclusion limit. Acts as a suppressor of RNA-mediated gene silencing, also known as post-transcriptional gene silencing (PTGS), a mechanism of plant viral defense that limits the accumulation of viral RNAs (By similarity).</text>
</comment>
<comment type="subunit">
    <text evidence="1">Homodimer and homooligomer. Interacts with capsid protein. Interacts with host AGO1; this interaction targets the host protein for degradation, thereby suppressing the antiviral RNA silencing (By similarity).</text>
</comment>
<comment type="subcellular location">
    <subcellularLocation>
        <location evidence="1">Host cytoplasm</location>
    </subcellularLocation>
</comment>
<comment type="miscellaneous">
    <text>TGBp1, TGBp2 and TGBp3 seem to act together for cell-to-cell propagation. TGBp1 is the main movement protein that physically cross the plasmodesma with the viral genome. TGBp2 and TGBp3 would facilitate TGBp1 function.</text>
</comment>
<comment type="similarity">
    <text evidence="2">Belongs to the Tymovirales TGBp1 protein family.</text>
</comment>
<gene>
    <name type="ORF">ORF2</name>
</gene>
<dbReference type="EMBL" id="S60150">
    <property type="protein sequence ID" value="AAB20077.1"/>
    <property type="molecule type" value="Genomic_RNA"/>
</dbReference>
<dbReference type="PIR" id="JQ1247">
    <property type="entry name" value="JQ1247"/>
</dbReference>
<dbReference type="GO" id="GO:0030430">
    <property type="term" value="C:host cell cytoplasm"/>
    <property type="evidence" value="ECO:0007669"/>
    <property type="project" value="UniProtKB-SubCell"/>
</dbReference>
<dbReference type="GO" id="GO:0005524">
    <property type="term" value="F:ATP binding"/>
    <property type="evidence" value="ECO:0007669"/>
    <property type="project" value="InterPro"/>
</dbReference>
<dbReference type="GO" id="GO:0003723">
    <property type="term" value="F:RNA binding"/>
    <property type="evidence" value="ECO:0007669"/>
    <property type="project" value="UniProtKB-KW"/>
</dbReference>
<dbReference type="GO" id="GO:0052170">
    <property type="term" value="P:symbiont-mediated suppression of host innate immune response"/>
    <property type="evidence" value="ECO:0007669"/>
    <property type="project" value="UniProtKB-KW"/>
</dbReference>
<dbReference type="GO" id="GO:0046740">
    <property type="term" value="P:transport of virus in host, cell to cell"/>
    <property type="evidence" value="ECO:0007669"/>
    <property type="project" value="UniProtKB-KW"/>
</dbReference>
<dbReference type="InterPro" id="IPR027351">
    <property type="entry name" value="(+)RNA_virus_helicase_core_dom"/>
</dbReference>
<dbReference type="Pfam" id="PF01443">
    <property type="entry name" value="Viral_helicase1"/>
    <property type="match status" value="1"/>
</dbReference>
<dbReference type="PROSITE" id="PS51657">
    <property type="entry name" value="PSRV_HELICASE"/>
    <property type="match status" value="1"/>
</dbReference>
<feature type="chain" id="PRO_0000222577" description="Movement and silencing protein TGBp1">
    <location>
        <begin position="1"/>
        <end position="231"/>
    </location>
</feature>
<feature type="domain" description="(+)RNA virus helicase ATP-binding">
    <location>
        <begin position="1"/>
        <end position="123"/>
    </location>
</feature>
<feature type="domain" description="(+)RNA virus helicase C-terminal">
    <location>
        <begin position="124"/>
        <end position="231"/>
    </location>
</feature>
<reference key="1">
    <citation type="journal article" date="1991" name="J. Gen. Virol.">
        <title>Nucleotide sequence and gene organization of the 3'-terminal region of chrysanthemum virus B genomic RNA.</title>
        <authorList>
            <person name="Levay K."/>
            <person name="Zavriev S."/>
        </authorList>
    </citation>
    <scope>NUCLEOTIDE SEQUENCE [GENOMIC RNA]</scope>
</reference>
<name>TGB1_CVB</name>
<organismHost>
    <name type="scientific">Chrysanthemum morifolium</name>
    <name type="common">Florist's daisy</name>
    <name type="synonym">Dendranthema grandiflorum</name>
    <dbReference type="NCBI Taxonomy" id="41568"/>
</organismHost>
<organismHost>
    <name type="scientific">Gynura</name>
    <dbReference type="NCBI Taxonomy" id="109564"/>
</organismHost>
<proteinExistence type="inferred from homology"/>
<organism>
    <name type="scientific">Chrysanthemum virus B</name>
    <name type="common">CVB</name>
    <dbReference type="NCBI Taxonomy" id="12165"/>
    <lineage>
        <taxon>Viruses</taxon>
        <taxon>Riboviria</taxon>
        <taxon>Orthornavirae</taxon>
        <taxon>Kitrinoviricota</taxon>
        <taxon>Alsuviricetes</taxon>
        <taxon>Tymovirales</taxon>
        <taxon>Betaflexiviridae</taxon>
        <taxon>Quinvirinae</taxon>
        <taxon>Carlavirus</taxon>
    </lineage>
</organism>